<protein>
    <recommendedName>
        <fullName>Cytochrome b</fullName>
    </recommendedName>
    <alternativeName>
        <fullName>Complex III subunit 3</fullName>
    </alternativeName>
    <alternativeName>
        <fullName>Complex III subunit III</fullName>
    </alternativeName>
    <alternativeName>
        <fullName>Cytochrome b-c1 complex subunit 3</fullName>
    </alternativeName>
    <alternativeName>
        <fullName>Ubiquinol-cytochrome-c reductase complex cytochrome b subunit</fullName>
    </alternativeName>
</protein>
<evidence type="ECO:0000250" key="1"/>
<evidence type="ECO:0000250" key="2">
    <source>
        <dbReference type="UniProtKB" id="P00157"/>
    </source>
</evidence>
<evidence type="ECO:0000250" key="3">
    <source>
        <dbReference type="UniProtKB" id="P00163"/>
    </source>
</evidence>
<evidence type="ECO:0000255" key="4">
    <source>
        <dbReference type="PROSITE-ProRule" id="PRU00967"/>
    </source>
</evidence>
<evidence type="ECO:0000255" key="5">
    <source>
        <dbReference type="PROSITE-ProRule" id="PRU00968"/>
    </source>
</evidence>
<name>CYB_SPIPN</name>
<dbReference type="EMBL" id="AF404303">
    <property type="protein sequence ID" value="AAK84235.1"/>
    <property type="molecule type" value="Genomic_DNA"/>
</dbReference>
<dbReference type="RefSeq" id="NP_150306.1">
    <property type="nucleotide sequence ID" value="NC_003052.1"/>
</dbReference>
<dbReference type="SMR" id="Q950S3"/>
<dbReference type="GeneID" id="809622"/>
<dbReference type="GO" id="GO:0005743">
    <property type="term" value="C:mitochondrial inner membrane"/>
    <property type="evidence" value="ECO:0007669"/>
    <property type="project" value="UniProtKB-SubCell"/>
</dbReference>
<dbReference type="GO" id="GO:0045275">
    <property type="term" value="C:respiratory chain complex III"/>
    <property type="evidence" value="ECO:0007669"/>
    <property type="project" value="InterPro"/>
</dbReference>
<dbReference type="GO" id="GO:0046872">
    <property type="term" value="F:metal ion binding"/>
    <property type="evidence" value="ECO:0007669"/>
    <property type="project" value="UniProtKB-KW"/>
</dbReference>
<dbReference type="GO" id="GO:0008121">
    <property type="term" value="F:ubiquinol-cytochrome-c reductase activity"/>
    <property type="evidence" value="ECO:0007669"/>
    <property type="project" value="InterPro"/>
</dbReference>
<dbReference type="GO" id="GO:0006122">
    <property type="term" value="P:mitochondrial electron transport, ubiquinol to cytochrome c"/>
    <property type="evidence" value="ECO:0007669"/>
    <property type="project" value="TreeGrafter"/>
</dbReference>
<dbReference type="CDD" id="cd00290">
    <property type="entry name" value="cytochrome_b_C"/>
    <property type="match status" value="1"/>
</dbReference>
<dbReference type="CDD" id="cd00284">
    <property type="entry name" value="Cytochrome_b_N"/>
    <property type="match status" value="1"/>
</dbReference>
<dbReference type="Gene3D" id="1.20.810.10">
    <property type="entry name" value="Cytochrome Bc1 Complex, Chain C"/>
    <property type="match status" value="1"/>
</dbReference>
<dbReference type="InterPro" id="IPR005798">
    <property type="entry name" value="Cyt_b/b6_C"/>
</dbReference>
<dbReference type="InterPro" id="IPR036150">
    <property type="entry name" value="Cyt_b/b6_C_sf"/>
</dbReference>
<dbReference type="InterPro" id="IPR005797">
    <property type="entry name" value="Cyt_b/b6_N"/>
</dbReference>
<dbReference type="InterPro" id="IPR027387">
    <property type="entry name" value="Cytb/b6-like_sf"/>
</dbReference>
<dbReference type="InterPro" id="IPR030689">
    <property type="entry name" value="Cytochrome_b"/>
</dbReference>
<dbReference type="InterPro" id="IPR048260">
    <property type="entry name" value="Cytochrome_b_C_euk/bac"/>
</dbReference>
<dbReference type="InterPro" id="IPR048259">
    <property type="entry name" value="Cytochrome_b_N_euk/bac"/>
</dbReference>
<dbReference type="InterPro" id="IPR016174">
    <property type="entry name" value="Di-haem_cyt_TM"/>
</dbReference>
<dbReference type="PANTHER" id="PTHR19271">
    <property type="entry name" value="CYTOCHROME B"/>
    <property type="match status" value="1"/>
</dbReference>
<dbReference type="PANTHER" id="PTHR19271:SF16">
    <property type="entry name" value="CYTOCHROME B"/>
    <property type="match status" value="1"/>
</dbReference>
<dbReference type="Pfam" id="PF00032">
    <property type="entry name" value="Cytochrom_B_C"/>
    <property type="match status" value="1"/>
</dbReference>
<dbReference type="Pfam" id="PF00033">
    <property type="entry name" value="Cytochrome_B"/>
    <property type="match status" value="1"/>
</dbReference>
<dbReference type="PIRSF" id="PIRSF038885">
    <property type="entry name" value="COB"/>
    <property type="match status" value="1"/>
</dbReference>
<dbReference type="SUPFAM" id="SSF81648">
    <property type="entry name" value="a domain/subunit of cytochrome bc1 complex (Ubiquinol-cytochrome c reductase)"/>
    <property type="match status" value="1"/>
</dbReference>
<dbReference type="SUPFAM" id="SSF81342">
    <property type="entry name" value="Transmembrane di-heme cytochromes"/>
    <property type="match status" value="1"/>
</dbReference>
<dbReference type="PROSITE" id="PS51003">
    <property type="entry name" value="CYTB_CTER"/>
    <property type="match status" value="1"/>
</dbReference>
<dbReference type="PROSITE" id="PS51002">
    <property type="entry name" value="CYTB_NTER"/>
    <property type="match status" value="1"/>
</dbReference>
<comment type="function">
    <text evidence="3">Component of the ubiquinol-cytochrome c reductase complex (complex III or cytochrome b-c1 complex) that is part of the mitochondrial respiratory chain. The b-c1 complex mediates electron transfer from ubiquinol to cytochrome c. Contributes to the generation of a proton gradient across the mitochondrial membrane that is then used for ATP synthesis.</text>
</comment>
<comment type="cofactor">
    <cofactor evidence="3">
        <name>heme b</name>
        <dbReference type="ChEBI" id="CHEBI:60344"/>
    </cofactor>
    <text evidence="3">Binds 2 heme b groups non-covalently.</text>
</comment>
<comment type="subunit">
    <text evidence="3">Fungal cytochrome b-c1 complex contains 10 subunits; 3 respiratory subunits, 2 core proteins and 5 low-molecular weight proteins. Cytochrome b-c1 complex is a homodimer.</text>
</comment>
<comment type="subcellular location">
    <subcellularLocation>
        <location evidence="3">Mitochondrion inner membrane</location>
        <topology evidence="3">Multi-pass membrane protein</topology>
    </subcellularLocation>
</comment>
<comment type="miscellaneous">
    <text evidence="1">Heme 1 (or BL or b562) is low-potential and absorbs at about 562 nm, and heme 2 (or BH or b566) is high-potential and absorbs at about 566 nm.</text>
</comment>
<comment type="similarity">
    <text evidence="4 5">Belongs to the cytochrome b family.</text>
</comment>
<comment type="caution">
    <text evidence="3">The protein contains only eight transmembrane helices, not nine as predicted by bioinformatics tools.</text>
</comment>
<proteinExistence type="inferred from homology"/>
<sequence length="396" mass="45288">MKLTKRNPILVLVNDFVIDSPLPTNLTYFWNFGSLLGVNLVILIISGLTLAMHYTPNTLLAFSSVEHIMRDVNNGWLLRYIHANGASFFFIWVYLHIGRNLYYGSYRSPRGLLWSIGVVIFILMMATAFIGYVLPWGQMSFWGATVITNLLSAIPWIGTDFVLFVWGGFSVDNATLNRFFSLHYLLPFILAALVVMHLLALHQDGSNNPEGISSSSDRLRFHPYFTSKDLVGFVWMAILLSIFVFFAPYYLGHPDNSIPANPLVTPHSIVPEWYFLPFYAILRAIPSKLGGVIAMFGALLILFPLALIHTNNVRSNRYRPLLNLLFWIFVFNFFVLLWVGAKPIAQPYILIGQISTIIYFLYFVILMILGCIMTYIYTKSNCFFIYFFLYFGCSIL</sequence>
<reference key="1">
    <citation type="journal article" date="2002" name="Mol. Biol. Evol.">
        <title>Hyaloraphidium curvatum: a linear mitochondrial genome, tRNA editing, and an evolutionary link to lower fungi.</title>
        <authorList>
            <person name="Forget L."/>
            <person name="Ustinova J."/>
            <person name="Wang Z."/>
            <person name="Huss V.A.R."/>
            <person name="Lang B.F."/>
        </authorList>
    </citation>
    <scope>NUCLEOTIDE SEQUENCE [LARGE SCALE GENOMIC DNA]</scope>
</reference>
<accession>Q950S3</accession>
<gene>
    <name type="primary">cob</name>
    <name type="synonym">cytB</name>
</gene>
<organism>
    <name type="scientific">Spizellomyces punctatus</name>
    <dbReference type="NCBI Taxonomy" id="109760"/>
    <lineage>
        <taxon>Eukaryota</taxon>
        <taxon>Fungi</taxon>
        <taxon>Fungi incertae sedis</taxon>
        <taxon>Chytridiomycota</taxon>
        <taxon>Chytridiomycota incertae sedis</taxon>
        <taxon>Chytridiomycetes</taxon>
        <taxon>Spizellomycetales</taxon>
        <taxon>Spizellomycetaceae</taxon>
        <taxon>Spizellomyces</taxon>
    </lineage>
</organism>
<feature type="chain" id="PRO_0000061764" description="Cytochrome b">
    <location>
        <begin position="1"/>
        <end position="396"/>
    </location>
</feature>
<feature type="transmembrane region" description="Helical" evidence="3">
    <location>
        <begin position="32"/>
        <end position="52"/>
    </location>
</feature>
<feature type="transmembrane region" description="Helical" evidence="3">
    <location>
        <begin position="76"/>
        <end position="98"/>
    </location>
</feature>
<feature type="transmembrane region" description="Helical" evidence="3">
    <location>
        <begin position="113"/>
        <end position="133"/>
    </location>
</feature>
<feature type="transmembrane region" description="Helical" evidence="3">
    <location>
        <begin position="179"/>
        <end position="199"/>
    </location>
</feature>
<feature type="transmembrane region" description="Helical" evidence="3">
    <location>
        <begin position="225"/>
        <end position="245"/>
    </location>
</feature>
<feature type="transmembrane region" description="Helical" evidence="3">
    <location>
        <begin position="289"/>
        <end position="309"/>
    </location>
</feature>
<feature type="transmembrane region" description="Helical" evidence="3">
    <location>
        <begin position="321"/>
        <end position="341"/>
    </location>
</feature>
<feature type="transmembrane region" description="Helical" evidence="3">
    <location>
        <begin position="348"/>
        <end position="368"/>
    </location>
</feature>
<feature type="binding site" description="axial binding residue" evidence="5">
    <location>
        <position position="82"/>
    </location>
    <ligand>
        <name>heme b</name>
        <dbReference type="ChEBI" id="CHEBI:60344"/>
        <label>b562</label>
    </ligand>
    <ligandPart>
        <name>Fe</name>
        <dbReference type="ChEBI" id="CHEBI:18248"/>
    </ligandPart>
</feature>
<feature type="binding site" description="axial binding residue" evidence="5">
    <location>
        <position position="96"/>
    </location>
    <ligand>
        <name>heme b</name>
        <dbReference type="ChEBI" id="CHEBI:60344"/>
        <label>b566</label>
    </ligand>
    <ligandPart>
        <name>Fe</name>
        <dbReference type="ChEBI" id="CHEBI:18248"/>
    </ligandPart>
</feature>
<feature type="binding site" description="axial binding residue" evidence="5">
    <location>
        <position position="183"/>
    </location>
    <ligand>
        <name>heme b</name>
        <dbReference type="ChEBI" id="CHEBI:60344"/>
        <label>b562</label>
    </ligand>
    <ligandPart>
        <name>Fe</name>
        <dbReference type="ChEBI" id="CHEBI:18248"/>
    </ligandPart>
</feature>
<feature type="binding site" description="axial binding residue" evidence="5">
    <location>
        <position position="197"/>
    </location>
    <ligand>
        <name>heme b</name>
        <dbReference type="ChEBI" id="CHEBI:60344"/>
        <label>b566</label>
    </ligand>
    <ligandPart>
        <name>Fe</name>
        <dbReference type="ChEBI" id="CHEBI:18248"/>
    </ligandPart>
</feature>
<feature type="binding site" evidence="2">
    <location>
        <position position="202"/>
    </location>
    <ligand>
        <name>a ubiquinone</name>
        <dbReference type="ChEBI" id="CHEBI:16389"/>
    </ligand>
</feature>
<geneLocation type="mitochondrion"/>
<keyword id="KW-0249">Electron transport</keyword>
<keyword id="KW-0349">Heme</keyword>
<keyword id="KW-0408">Iron</keyword>
<keyword id="KW-0472">Membrane</keyword>
<keyword id="KW-0479">Metal-binding</keyword>
<keyword id="KW-0496">Mitochondrion</keyword>
<keyword id="KW-0999">Mitochondrion inner membrane</keyword>
<keyword id="KW-0679">Respiratory chain</keyword>
<keyword id="KW-0812">Transmembrane</keyword>
<keyword id="KW-1133">Transmembrane helix</keyword>
<keyword id="KW-0813">Transport</keyword>
<keyword id="KW-0830">Ubiquinone</keyword>